<gene>
    <name type="primary">U2AF65B</name>
    <name type="ordered locus">Os11g0682300</name>
    <name type="ordered locus">LOC_Os11g45590</name>
</gene>
<organism>
    <name type="scientific">Oryza sativa subsp. japonica</name>
    <name type="common">Rice</name>
    <dbReference type="NCBI Taxonomy" id="39947"/>
    <lineage>
        <taxon>Eukaryota</taxon>
        <taxon>Viridiplantae</taxon>
        <taxon>Streptophyta</taxon>
        <taxon>Embryophyta</taxon>
        <taxon>Tracheophyta</taxon>
        <taxon>Spermatophyta</taxon>
        <taxon>Magnoliopsida</taxon>
        <taxon>Liliopsida</taxon>
        <taxon>Poales</taxon>
        <taxon>Poaceae</taxon>
        <taxon>BOP clade</taxon>
        <taxon>Oryzoideae</taxon>
        <taxon>Oryzeae</taxon>
        <taxon>Oryzinae</taxon>
        <taxon>Oryza</taxon>
        <taxon>Oryza sativa</taxon>
    </lineage>
</organism>
<dbReference type="EMBL" id="DP000010">
    <property type="protein sequence ID" value="ABA95281.2"/>
    <property type="molecule type" value="Genomic_DNA"/>
</dbReference>
<dbReference type="EMBL" id="AP008217">
    <property type="protein sequence ID" value="BAF28822.1"/>
    <property type="status" value="ALT_SEQ"/>
    <property type="molecule type" value="Genomic_DNA"/>
</dbReference>
<dbReference type="EMBL" id="AP014967">
    <property type="status" value="NOT_ANNOTATED_CDS"/>
    <property type="molecule type" value="Genomic_DNA"/>
</dbReference>
<dbReference type="RefSeq" id="XP_015617533.1">
    <property type="nucleotide sequence ID" value="XM_015762047.1"/>
</dbReference>
<dbReference type="SMR" id="Q2QZL4"/>
<dbReference type="FunCoup" id="Q2QZL4">
    <property type="interactions" value="3033"/>
</dbReference>
<dbReference type="STRING" id="39947.Q2QZL4"/>
<dbReference type="PaxDb" id="39947-Q2QZL4"/>
<dbReference type="KEGG" id="dosa:Os11g0682300"/>
<dbReference type="eggNOG" id="KOG0120">
    <property type="taxonomic scope" value="Eukaryota"/>
</dbReference>
<dbReference type="InParanoid" id="Q2QZL4"/>
<dbReference type="OrthoDB" id="10266058at2759"/>
<dbReference type="Proteomes" id="UP000000763">
    <property type="component" value="Chromosome 11"/>
</dbReference>
<dbReference type="Proteomes" id="UP000059680">
    <property type="component" value="Chromosome 11"/>
</dbReference>
<dbReference type="GO" id="GO:0000243">
    <property type="term" value="C:commitment complex"/>
    <property type="evidence" value="ECO:0000318"/>
    <property type="project" value="GO_Central"/>
</dbReference>
<dbReference type="GO" id="GO:0016607">
    <property type="term" value="C:nuclear speck"/>
    <property type="evidence" value="ECO:0000318"/>
    <property type="project" value="GO_Central"/>
</dbReference>
<dbReference type="GO" id="GO:0071004">
    <property type="term" value="C:U2-type prespliceosome"/>
    <property type="evidence" value="ECO:0000318"/>
    <property type="project" value="GO_Central"/>
</dbReference>
<dbReference type="GO" id="GO:0089701">
    <property type="term" value="C:U2AF complex"/>
    <property type="evidence" value="ECO:0000318"/>
    <property type="project" value="GO_Central"/>
</dbReference>
<dbReference type="GO" id="GO:0008187">
    <property type="term" value="F:poly-pyrimidine tract binding"/>
    <property type="evidence" value="ECO:0000318"/>
    <property type="project" value="GO_Central"/>
</dbReference>
<dbReference type="GO" id="GO:0030628">
    <property type="term" value="F:pre-mRNA 3'-splice site binding"/>
    <property type="evidence" value="ECO:0000318"/>
    <property type="project" value="GO_Central"/>
</dbReference>
<dbReference type="GO" id="GO:0000245">
    <property type="term" value="P:spliceosomal complex assembly"/>
    <property type="evidence" value="ECO:0000318"/>
    <property type="project" value="GO_Central"/>
</dbReference>
<dbReference type="CDD" id="cd12230">
    <property type="entry name" value="RRM1_U2AF65"/>
    <property type="match status" value="1"/>
</dbReference>
<dbReference type="CDD" id="cd12231">
    <property type="entry name" value="RRM2_U2AF65"/>
    <property type="match status" value="1"/>
</dbReference>
<dbReference type="CDD" id="cd12232">
    <property type="entry name" value="RRM3_U2AF65"/>
    <property type="match status" value="1"/>
</dbReference>
<dbReference type="FunFam" id="3.30.70.330:FF:000057">
    <property type="entry name" value="U2 snRNP auxiliary factor large subunit"/>
    <property type="match status" value="1"/>
</dbReference>
<dbReference type="FunFam" id="3.30.70.330:FF:000111">
    <property type="entry name" value="U2 snRNP auxiliary factor large subunit"/>
    <property type="match status" value="1"/>
</dbReference>
<dbReference type="FunFam" id="3.30.70.330:FF:000225">
    <property type="entry name" value="U2 snRNP auxiliary factor large subunit"/>
    <property type="match status" value="1"/>
</dbReference>
<dbReference type="Gene3D" id="3.30.70.330">
    <property type="match status" value="3"/>
</dbReference>
<dbReference type="InterPro" id="IPR012677">
    <property type="entry name" value="Nucleotide-bd_a/b_plait_sf"/>
</dbReference>
<dbReference type="InterPro" id="IPR035979">
    <property type="entry name" value="RBD_domain_sf"/>
</dbReference>
<dbReference type="InterPro" id="IPR000504">
    <property type="entry name" value="RRM_dom"/>
</dbReference>
<dbReference type="InterPro" id="IPR003954">
    <property type="entry name" value="RRM_dom_euk"/>
</dbReference>
<dbReference type="InterPro" id="IPR006529">
    <property type="entry name" value="U2AF_lg"/>
</dbReference>
<dbReference type="NCBIfam" id="TIGR01642">
    <property type="entry name" value="U2AF_lg"/>
    <property type="match status" value="1"/>
</dbReference>
<dbReference type="PANTHER" id="PTHR23139">
    <property type="entry name" value="RNA-BINDING PROTEIN"/>
    <property type="match status" value="1"/>
</dbReference>
<dbReference type="Pfam" id="PF00076">
    <property type="entry name" value="RRM_1"/>
    <property type="match status" value="1"/>
</dbReference>
<dbReference type="SMART" id="SM00360">
    <property type="entry name" value="RRM"/>
    <property type="match status" value="3"/>
</dbReference>
<dbReference type="SMART" id="SM00361">
    <property type="entry name" value="RRM_1"/>
    <property type="match status" value="1"/>
</dbReference>
<dbReference type="SUPFAM" id="SSF54928">
    <property type="entry name" value="RNA-binding domain, RBD"/>
    <property type="match status" value="2"/>
</dbReference>
<dbReference type="PROSITE" id="PS50102">
    <property type="entry name" value="RRM"/>
    <property type="match status" value="2"/>
</dbReference>
<accession>Q2QZL4</accession>
<accession>Q0IR43</accession>
<keyword id="KW-0507">mRNA processing</keyword>
<keyword id="KW-0508">mRNA splicing</keyword>
<keyword id="KW-0539">Nucleus</keyword>
<keyword id="KW-1185">Reference proteome</keyword>
<keyword id="KW-0677">Repeat</keyword>
<keyword id="KW-0694">RNA-binding</keyword>
<feature type="chain" id="PRO_0000352272" description="Splicing factor U2af large subunit B">
    <location>
        <begin position="1"/>
        <end position="548"/>
    </location>
</feature>
<feature type="domain" description="RRM 1" evidence="2">
    <location>
        <begin position="214"/>
        <end position="297"/>
    </location>
</feature>
<feature type="domain" description="RRM 2" evidence="2">
    <location>
        <begin position="334"/>
        <end position="412"/>
    </location>
</feature>
<feature type="domain" description="RRM 3" evidence="2">
    <location>
        <begin position="453"/>
        <end position="539"/>
    </location>
</feature>
<feature type="region of interest" description="Disordered" evidence="3">
    <location>
        <begin position="1"/>
        <end position="156"/>
    </location>
</feature>
<feature type="compositionally biased region" description="Basic and acidic residues" evidence="3">
    <location>
        <begin position="1"/>
        <end position="82"/>
    </location>
</feature>
<feature type="compositionally biased region" description="Basic residues" evidence="3">
    <location>
        <begin position="83"/>
        <end position="93"/>
    </location>
</feature>
<feature type="compositionally biased region" description="Basic and acidic residues" evidence="3">
    <location>
        <begin position="94"/>
        <end position="120"/>
    </location>
</feature>
<feature type="compositionally biased region" description="Basic residues" evidence="3">
    <location>
        <begin position="121"/>
        <end position="149"/>
    </location>
</feature>
<comment type="function">
    <text evidence="1">Necessary for the splicing of pre-mRNA.</text>
</comment>
<comment type="subcellular location">
    <subcellularLocation>
        <location evidence="1">Nucleus</location>
    </subcellularLocation>
</comment>
<comment type="domain">
    <text>N-terminal RS domain has a very strong bias in favor of D over S.</text>
</comment>
<comment type="similarity">
    <text evidence="4">Belongs to the splicing factor SR family.</text>
</comment>
<comment type="sequence caution" evidence="4">
    <conflict type="erroneous gene model prediction">
        <sequence resource="EMBL-CDS" id="BAF28822"/>
    </conflict>
</comment>
<evidence type="ECO:0000250" key="1"/>
<evidence type="ECO:0000255" key="2">
    <source>
        <dbReference type="PROSITE-ProRule" id="PRU00176"/>
    </source>
</evidence>
<evidence type="ECO:0000256" key="3">
    <source>
        <dbReference type="SAM" id="MobiDB-lite"/>
    </source>
</evidence>
<evidence type="ECO:0000305" key="4"/>
<protein>
    <recommendedName>
        <fullName>Splicing factor U2af large subunit B</fullName>
    </recommendedName>
    <alternativeName>
        <fullName>U2 auxiliary factor 65 kDa subunit B</fullName>
    </alternativeName>
    <alternativeName>
        <fullName>U2 small nuclear ribonucleoprotein auxiliary factor large subunit B</fullName>
        <shortName>U2 snRNP auxiliary factor large subunit B</shortName>
    </alternativeName>
</protein>
<name>U2A2B_ORYSJ</name>
<sequence length="548" mass="61360">MADDHAAAADLVDGGRPEGDTHSREDGLSKPRDKDREREKDKDRERHRDRDRDRGRDRDRDKDKEKDRDKERDRDRDRDKDRDRHHRHHRERREHRDRSDDHDRHRSRDSERRRDHERDGRRRHRSRSRSRSRGRDRRSRSRSRSKSKRVSGFDMAPPAQAVVPQFPAIPTPSQFPGTAIPGMFPNMLPMGVGQFNPLVIQPQAMTQQATRHARRVYVGGLPPTANEQSVAIYFNQVMAAIGGNTAGPGDAVLNVYINHDKKFAFVEMRSVEEASNAMALDGILFEGAPVKVRRPTDYNPSLAAALGPSQPSPNLNLAAVGLTPGSAGGLEGPDRIFVGGLPYYFTEAQVRELLESFGPLRGFDLVKDRETGNSKGYAFCVYQDLNVTDIACAALNGIKMGDKTLTVRRANQGAAQPRPEQESILLQAQQQVQLQKLVYQVGALPTKVVCLTQVVSADELKDDEEYEDIMEDMRLEAGKYGNLIKVVIPRPDPSGLPVAGVGKVFLEYADVDGATKAKTAMHGRKFGGNPVVAVFYPENKFSSAEYDA</sequence>
<reference key="1">
    <citation type="journal article" date="2005" name="BMC Biol.">
        <title>The sequence of rice chromosomes 11 and 12, rich in disease resistance genes and recent gene duplications.</title>
        <authorList>
            <consortium name="The rice chromosomes 11 and 12 sequencing consortia"/>
        </authorList>
    </citation>
    <scope>NUCLEOTIDE SEQUENCE [LARGE SCALE GENOMIC DNA]</scope>
    <source>
        <strain>cv. Nipponbare</strain>
    </source>
</reference>
<reference key="2">
    <citation type="journal article" date="2005" name="Nature">
        <title>The map-based sequence of the rice genome.</title>
        <authorList>
            <consortium name="International rice genome sequencing project (IRGSP)"/>
        </authorList>
    </citation>
    <scope>NUCLEOTIDE SEQUENCE [LARGE SCALE GENOMIC DNA]</scope>
    <source>
        <strain>cv. Nipponbare</strain>
    </source>
</reference>
<reference key="3">
    <citation type="journal article" date="2008" name="Nucleic Acids Res.">
        <title>The rice annotation project database (RAP-DB): 2008 update.</title>
        <authorList>
            <consortium name="The rice annotation project (RAP)"/>
        </authorList>
    </citation>
    <scope>GENOME REANNOTATION</scope>
    <source>
        <strain>cv. Nipponbare</strain>
    </source>
</reference>
<reference key="4">
    <citation type="journal article" date="2013" name="Rice">
        <title>Improvement of the Oryza sativa Nipponbare reference genome using next generation sequence and optical map data.</title>
        <authorList>
            <person name="Kawahara Y."/>
            <person name="de la Bastide M."/>
            <person name="Hamilton J.P."/>
            <person name="Kanamori H."/>
            <person name="McCombie W.R."/>
            <person name="Ouyang S."/>
            <person name="Schwartz D.C."/>
            <person name="Tanaka T."/>
            <person name="Wu J."/>
            <person name="Zhou S."/>
            <person name="Childs K.L."/>
            <person name="Davidson R.M."/>
            <person name="Lin H."/>
            <person name="Quesada-Ocampo L."/>
            <person name="Vaillancourt B."/>
            <person name="Sakai H."/>
            <person name="Lee S.S."/>
            <person name="Kim J."/>
            <person name="Numa H."/>
            <person name="Itoh T."/>
            <person name="Buell C.R."/>
            <person name="Matsumoto T."/>
        </authorList>
    </citation>
    <scope>GENOME REANNOTATION</scope>
    <source>
        <strain>cv. Nipponbare</strain>
    </source>
</reference>
<proteinExistence type="inferred from homology"/>